<keyword id="KW-0093">Biotin biosynthesis</keyword>
<keyword id="KW-0489">Methyltransferase</keyword>
<keyword id="KW-0949">S-adenosyl-L-methionine</keyword>
<keyword id="KW-0808">Transferase</keyword>
<name>BIOC_PRIM3</name>
<accession>D5DIV9</accession>
<reference key="1">
    <citation type="journal article" date="2011" name="J. Bacteriol.">
        <title>Genome sequences of the biotechnologically important Bacillus megaterium strains QM B1551 and DSM319.</title>
        <authorList>
            <person name="Eppinger M."/>
            <person name="Bunk B."/>
            <person name="Johns M.A."/>
            <person name="Edirisinghe J.N."/>
            <person name="Kutumbaka K.K."/>
            <person name="Koenig S.S."/>
            <person name="Creasy H.H."/>
            <person name="Rosovitz M.J."/>
            <person name="Riley D.R."/>
            <person name="Daugherty S."/>
            <person name="Martin M."/>
            <person name="Elbourne L.D."/>
            <person name="Paulsen I."/>
            <person name="Biedendieck R."/>
            <person name="Braun C."/>
            <person name="Grayburn S."/>
            <person name="Dhingra S."/>
            <person name="Lukyanchuk V."/>
            <person name="Ball B."/>
            <person name="Ul-Qamar R."/>
            <person name="Seibel J."/>
            <person name="Bremer E."/>
            <person name="Jahn D."/>
            <person name="Ravel J."/>
            <person name="Vary P.S."/>
        </authorList>
    </citation>
    <scope>NUCLEOTIDE SEQUENCE [LARGE SCALE GENOMIC DNA]</scope>
    <source>
        <strain>DSM 319 / IMG 1521</strain>
    </source>
</reference>
<dbReference type="EC" id="2.1.1.197" evidence="1"/>
<dbReference type="EMBL" id="CP001982">
    <property type="protein sequence ID" value="ADF40528.1"/>
    <property type="molecule type" value="Genomic_DNA"/>
</dbReference>
<dbReference type="RefSeq" id="WP_013084383.1">
    <property type="nucleotide sequence ID" value="NC_014103.1"/>
</dbReference>
<dbReference type="SMR" id="D5DIV9"/>
<dbReference type="KEGG" id="bmd:BMD_3695"/>
<dbReference type="PATRIC" id="fig|592022.4.peg.3675"/>
<dbReference type="HOGENOM" id="CLU_046586_2_3_9"/>
<dbReference type="UniPathway" id="UPA00078"/>
<dbReference type="Proteomes" id="UP000002365">
    <property type="component" value="Chromosome"/>
</dbReference>
<dbReference type="GO" id="GO:0010340">
    <property type="term" value="F:carboxyl-O-methyltransferase activity"/>
    <property type="evidence" value="ECO:0007669"/>
    <property type="project" value="UniProtKB-UniRule"/>
</dbReference>
<dbReference type="GO" id="GO:0102130">
    <property type="term" value="F:malonyl-CoA methyltransferase activity"/>
    <property type="evidence" value="ECO:0007669"/>
    <property type="project" value="UniProtKB-EC"/>
</dbReference>
<dbReference type="GO" id="GO:0009102">
    <property type="term" value="P:biotin biosynthetic process"/>
    <property type="evidence" value="ECO:0007669"/>
    <property type="project" value="UniProtKB-UniRule"/>
</dbReference>
<dbReference type="GO" id="GO:0032259">
    <property type="term" value="P:methylation"/>
    <property type="evidence" value="ECO:0007669"/>
    <property type="project" value="UniProtKB-KW"/>
</dbReference>
<dbReference type="CDD" id="cd02440">
    <property type="entry name" value="AdoMet_MTases"/>
    <property type="match status" value="1"/>
</dbReference>
<dbReference type="Gene3D" id="3.40.50.150">
    <property type="entry name" value="Vaccinia Virus protein VP39"/>
    <property type="match status" value="1"/>
</dbReference>
<dbReference type="HAMAP" id="MF_00835">
    <property type="entry name" value="BioC"/>
    <property type="match status" value="1"/>
</dbReference>
<dbReference type="InterPro" id="IPR011814">
    <property type="entry name" value="BioC"/>
</dbReference>
<dbReference type="InterPro" id="IPR041698">
    <property type="entry name" value="Methyltransf_25"/>
</dbReference>
<dbReference type="InterPro" id="IPR029063">
    <property type="entry name" value="SAM-dependent_MTases_sf"/>
</dbReference>
<dbReference type="NCBIfam" id="TIGR02072">
    <property type="entry name" value="BioC"/>
    <property type="match status" value="1"/>
</dbReference>
<dbReference type="PANTHER" id="PTHR43861:SF3">
    <property type="entry name" value="PUTATIVE (AFU_ORTHOLOGUE AFUA_2G14390)-RELATED"/>
    <property type="match status" value="1"/>
</dbReference>
<dbReference type="PANTHER" id="PTHR43861">
    <property type="entry name" value="TRANS-ACONITATE 2-METHYLTRANSFERASE-RELATED"/>
    <property type="match status" value="1"/>
</dbReference>
<dbReference type="Pfam" id="PF13649">
    <property type="entry name" value="Methyltransf_25"/>
    <property type="match status" value="1"/>
</dbReference>
<dbReference type="SUPFAM" id="SSF53335">
    <property type="entry name" value="S-adenosyl-L-methionine-dependent methyltransferases"/>
    <property type="match status" value="1"/>
</dbReference>
<organism>
    <name type="scientific">Priestia megaterium (strain DSM 319 / IMG 1521)</name>
    <name type="common">Bacillus megaterium</name>
    <dbReference type="NCBI Taxonomy" id="592022"/>
    <lineage>
        <taxon>Bacteria</taxon>
        <taxon>Bacillati</taxon>
        <taxon>Bacillota</taxon>
        <taxon>Bacilli</taxon>
        <taxon>Bacillales</taxon>
        <taxon>Bacillaceae</taxon>
        <taxon>Priestia</taxon>
    </lineage>
</organism>
<comment type="function">
    <text evidence="1">Converts the free carboxyl group of a malonyl-thioester to its methyl ester by transfer of a methyl group from S-adenosyl-L-methionine (SAM). It allows to synthesize pimeloyl-ACP via the fatty acid synthetic pathway.</text>
</comment>
<comment type="catalytic activity">
    <reaction evidence="1">
        <text>malonyl-[ACP] + S-adenosyl-L-methionine = malonyl-[ACP] methyl ester + S-adenosyl-L-homocysteine</text>
        <dbReference type="Rhea" id="RHEA:17105"/>
        <dbReference type="Rhea" id="RHEA-COMP:9623"/>
        <dbReference type="Rhea" id="RHEA-COMP:9954"/>
        <dbReference type="ChEBI" id="CHEBI:57856"/>
        <dbReference type="ChEBI" id="CHEBI:59789"/>
        <dbReference type="ChEBI" id="CHEBI:78449"/>
        <dbReference type="ChEBI" id="CHEBI:78845"/>
        <dbReference type="EC" id="2.1.1.197"/>
    </reaction>
</comment>
<comment type="pathway">
    <text evidence="1">Cofactor biosynthesis; biotin biosynthesis.</text>
</comment>
<comment type="similarity">
    <text evidence="1">Belongs to the methyltransferase superfamily.</text>
</comment>
<protein>
    <recommendedName>
        <fullName evidence="1">Malonyl-[acyl-carrier protein] O-methyltransferase</fullName>
        <shortName evidence="1">Malonyl-ACP O-methyltransferase</shortName>
        <ecNumber evidence="1">2.1.1.197</ecNumber>
    </recommendedName>
    <alternativeName>
        <fullName evidence="1">Biotin synthesis protein BioC</fullName>
    </alternativeName>
</protein>
<gene>
    <name evidence="1" type="primary">bioC</name>
    <name type="ordered locus">BMD_3695</name>
</gene>
<feature type="chain" id="PRO_0000412481" description="Malonyl-[acyl-carrier protein] O-methyltransferase">
    <location>
        <begin position="1"/>
        <end position="274"/>
    </location>
</feature>
<evidence type="ECO:0000255" key="1">
    <source>
        <dbReference type="HAMAP-Rule" id="MF_00835"/>
    </source>
</evidence>
<sequence length="274" mass="31357">MINKQLLKKRFNNHAKTYDAYADVQKSMAHQLINQLSTNFFNQEIAILEIGCGTGYLTQLLCKKFPKAAITAVDLSSGMIELAKKKVTEDRVSLICGDIEELSIERQYDLIISNATFQWFNSLHTTIKKLYKQLKPAGSLLFSTFGNGTFQELHSCYSHAKQKLGLFSNSSPGQSFFSLEELSQICEQALVPLREHPFKLSKMEKLEVQYFPTVQAFFTSIKKIGASNSNEESYCQRPSFFRQLINLYENNHRDENGVKVTYHCLMFNITKTNQ</sequence>
<proteinExistence type="inferred from homology"/>